<protein>
    <recommendedName>
        <fullName evidence="1">Cysteine--tRNA ligase</fullName>
        <ecNumber evidence="1">6.1.1.16</ecNumber>
    </recommendedName>
    <alternativeName>
        <fullName evidence="1">Cysteinyl-tRNA synthetase</fullName>
        <shortName evidence="1">CysRS</shortName>
    </alternativeName>
</protein>
<evidence type="ECO:0000255" key="1">
    <source>
        <dbReference type="HAMAP-Rule" id="MF_00041"/>
    </source>
</evidence>
<dbReference type="EC" id="6.1.1.16" evidence="1"/>
<dbReference type="EMBL" id="CP000264">
    <property type="protein sequence ID" value="ABD54875.1"/>
    <property type="molecule type" value="Genomic_DNA"/>
</dbReference>
<dbReference type="RefSeq" id="WP_011455080.1">
    <property type="nucleotide sequence ID" value="NC_007802.1"/>
</dbReference>
<dbReference type="SMR" id="Q28QY7"/>
<dbReference type="STRING" id="290400.Jann_1958"/>
<dbReference type="KEGG" id="jan:Jann_1958"/>
<dbReference type="eggNOG" id="COG0215">
    <property type="taxonomic scope" value="Bacteria"/>
</dbReference>
<dbReference type="HOGENOM" id="CLU_013528_0_1_5"/>
<dbReference type="OrthoDB" id="9815130at2"/>
<dbReference type="Proteomes" id="UP000008326">
    <property type="component" value="Chromosome"/>
</dbReference>
<dbReference type="GO" id="GO:0005829">
    <property type="term" value="C:cytosol"/>
    <property type="evidence" value="ECO:0007669"/>
    <property type="project" value="TreeGrafter"/>
</dbReference>
<dbReference type="GO" id="GO:0005524">
    <property type="term" value="F:ATP binding"/>
    <property type="evidence" value="ECO:0007669"/>
    <property type="project" value="UniProtKB-UniRule"/>
</dbReference>
<dbReference type="GO" id="GO:0004817">
    <property type="term" value="F:cysteine-tRNA ligase activity"/>
    <property type="evidence" value="ECO:0007669"/>
    <property type="project" value="UniProtKB-UniRule"/>
</dbReference>
<dbReference type="GO" id="GO:0008270">
    <property type="term" value="F:zinc ion binding"/>
    <property type="evidence" value="ECO:0007669"/>
    <property type="project" value="UniProtKB-UniRule"/>
</dbReference>
<dbReference type="GO" id="GO:0006423">
    <property type="term" value="P:cysteinyl-tRNA aminoacylation"/>
    <property type="evidence" value="ECO:0007669"/>
    <property type="project" value="UniProtKB-UniRule"/>
</dbReference>
<dbReference type="CDD" id="cd00672">
    <property type="entry name" value="CysRS_core"/>
    <property type="match status" value="1"/>
</dbReference>
<dbReference type="FunFam" id="3.40.50.620:FF:000068">
    <property type="entry name" value="Cysteine--tRNA ligase"/>
    <property type="match status" value="1"/>
</dbReference>
<dbReference type="Gene3D" id="3.40.50.620">
    <property type="entry name" value="HUPs"/>
    <property type="match status" value="1"/>
</dbReference>
<dbReference type="HAMAP" id="MF_00041">
    <property type="entry name" value="Cys_tRNA_synth"/>
    <property type="match status" value="1"/>
</dbReference>
<dbReference type="InterPro" id="IPR015803">
    <property type="entry name" value="Cys-tRNA-ligase"/>
</dbReference>
<dbReference type="InterPro" id="IPR024909">
    <property type="entry name" value="Cys-tRNA/MSH_ligase"/>
</dbReference>
<dbReference type="InterPro" id="IPR014729">
    <property type="entry name" value="Rossmann-like_a/b/a_fold"/>
</dbReference>
<dbReference type="InterPro" id="IPR032678">
    <property type="entry name" value="tRNA-synt_1_cat_dom"/>
</dbReference>
<dbReference type="InterPro" id="IPR009080">
    <property type="entry name" value="tRNAsynth_Ia_anticodon-bd"/>
</dbReference>
<dbReference type="NCBIfam" id="TIGR00435">
    <property type="entry name" value="cysS"/>
    <property type="match status" value="1"/>
</dbReference>
<dbReference type="PANTHER" id="PTHR10890:SF3">
    <property type="entry name" value="CYSTEINE--TRNA LIGASE, CYTOPLASMIC"/>
    <property type="match status" value="1"/>
</dbReference>
<dbReference type="PANTHER" id="PTHR10890">
    <property type="entry name" value="CYSTEINYL-TRNA SYNTHETASE"/>
    <property type="match status" value="1"/>
</dbReference>
<dbReference type="Pfam" id="PF01406">
    <property type="entry name" value="tRNA-synt_1e"/>
    <property type="match status" value="1"/>
</dbReference>
<dbReference type="PRINTS" id="PR00983">
    <property type="entry name" value="TRNASYNTHCYS"/>
</dbReference>
<dbReference type="SUPFAM" id="SSF47323">
    <property type="entry name" value="Anticodon-binding domain of a subclass of class I aminoacyl-tRNA synthetases"/>
    <property type="match status" value="1"/>
</dbReference>
<dbReference type="SUPFAM" id="SSF52374">
    <property type="entry name" value="Nucleotidylyl transferase"/>
    <property type="match status" value="1"/>
</dbReference>
<comment type="catalytic activity">
    <reaction evidence="1">
        <text>tRNA(Cys) + L-cysteine + ATP = L-cysteinyl-tRNA(Cys) + AMP + diphosphate</text>
        <dbReference type="Rhea" id="RHEA:17773"/>
        <dbReference type="Rhea" id="RHEA-COMP:9661"/>
        <dbReference type="Rhea" id="RHEA-COMP:9679"/>
        <dbReference type="ChEBI" id="CHEBI:30616"/>
        <dbReference type="ChEBI" id="CHEBI:33019"/>
        <dbReference type="ChEBI" id="CHEBI:35235"/>
        <dbReference type="ChEBI" id="CHEBI:78442"/>
        <dbReference type="ChEBI" id="CHEBI:78517"/>
        <dbReference type="ChEBI" id="CHEBI:456215"/>
        <dbReference type="EC" id="6.1.1.16"/>
    </reaction>
</comment>
<comment type="cofactor">
    <cofactor evidence="1">
        <name>Zn(2+)</name>
        <dbReference type="ChEBI" id="CHEBI:29105"/>
    </cofactor>
    <text evidence="1">Binds 1 zinc ion per subunit.</text>
</comment>
<comment type="subunit">
    <text evidence="1">Monomer.</text>
</comment>
<comment type="subcellular location">
    <subcellularLocation>
        <location evidence="1">Cytoplasm</location>
    </subcellularLocation>
</comment>
<comment type="similarity">
    <text evidence="1">Belongs to the class-I aminoacyl-tRNA synthetase family.</text>
</comment>
<name>SYC_JANSC</name>
<organism>
    <name type="scientific">Jannaschia sp. (strain CCS1)</name>
    <dbReference type="NCBI Taxonomy" id="290400"/>
    <lineage>
        <taxon>Bacteria</taxon>
        <taxon>Pseudomonadati</taxon>
        <taxon>Pseudomonadota</taxon>
        <taxon>Alphaproteobacteria</taxon>
        <taxon>Rhodobacterales</taxon>
        <taxon>Roseobacteraceae</taxon>
        <taxon>Jannaschia</taxon>
    </lineage>
</organism>
<gene>
    <name evidence="1" type="primary">cysS</name>
    <name type="ordered locus">Jann_1958</name>
</gene>
<reference key="1">
    <citation type="submission" date="2006-02" db="EMBL/GenBank/DDBJ databases">
        <title>Complete sequence of chromosome of Jannaschia sp. CCS1.</title>
        <authorList>
            <consortium name="US DOE Joint Genome Institute"/>
            <person name="Copeland A."/>
            <person name="Lucas S."/>
            <person name="Lapidus A."/>
            <person name="Barry K."/>
            <person name="Detter J.C."/>
            <person name="Glavina del Rio T."/>
            <person name="Hammon N."/>
            <person name="Israni S."/>
            <person name="Pitluck S."/>
            <person name="Brettin T."/>
            <person name="Bruce D."/>
            <person name="Han C."/>
            <person name="Tapia R."/>
            <person name="Gilna P."/>
            <person name="Chertkov O."/>
            <person name="Saunders E."/>
            <person name="Schmutz J."/>
            <person name="Larimer F."/>
            <person name="Land M."/>
            <person name="Kyrpides N."/>
            <person name="Lykidis A."/>
            <person name="Moran M.A."/>
            <person name="Belas R."/>
            <person name="Ye W."/>
            <person name="Buchan A."/>
            <person name="Gonzalez J.M."/>
            <person name="Schell M.A."/>
            <person name="Richardson P."/>
        </authorList>
    </citation>
    <scope>NUCLEOTIDE SEQUENCE [LARGE SCALE GENOMIC DNA]</scope>
    <source>
        <strain>CCS1</strain>
    </source>
</reference>
<sequence length="453" mass="50235">MVEIHLKNSKSRKVELLQPIEPGRVSLYLCGPTVYDRAHLGNARSAVVFDQLFRLLRHVYGAENVTFVRNFTDVDDKINARALAEGREIADLTAETSQWYLDDTRALGVLDPNHMPRATEYIAEMVAFIEDLIAKGFAYARDGHALFRVRSFDDYGKLSGRSVDDMIAGARVEVAPYKEDPMDFVLWKPSSDDIPGWDSPWGRGRPGWHIECSAMAHALLGEQFDIHGGGADLMFPHHENEVAQSCAAGHGFANIWMHNEMLQVEGKKMSKSLGNFFTVRDLLDQGVPGEVIRFVMLSTHYGKPMDWTEKKRAEAEATLRKWYAALRQSVAEQEATPHLVDSLADDLNTALAITTLHGMYETGNFGPLAGGLRLLGLWSGTVPDWSEIAEVDLTYFAGRFSSARAEAMVTKDFTDVDALKSALTAAGVEVRMSKDGVELVPGPTFDPAKLEDL</sequence>
<proteinExistence type="inferred from homology"/>
<accession>Q28QY7</accession>
<keyword id="KW-0030">Aminoacyl-tRNA synthetase</keyword>
<keyword id="KW-0067">ATP-binding</keyword>
<keyword id="KW-0963">Cytoplasm</keyword>
<keyword id="KW-0436">Ligase</keyword>
<keyword id="KW-0479">Metal-binding</keyword>
<keyword id="KW-0547">Nucleotide-binding</keyword>
<keyword id="KW-0648">Protein biosynthesis</keyword>
<keyword id="KW-1185">Reference proteome</keyword>
<keyword id="KW-0862">Zinc</keyword>
<feature type="chain" id="PRO_0000240918" description="Cysteine--tRNA ligase">
    <location>
        <begin position="1"/>
        <end position="453"/>
    </location>
</feature>
<feature type="short sequence motif" description="'HIGH' region">
    <location>
        <begin position="32"/>
        <end position="42"/>
    </location>
</feature>
<feature type="short sequence motif" description="'KMSKS' region">
    <location>
        <begin position="268"/>
        <end position="272"/>
    </location>
</feature>
<feature type="binding site" evidence="1">
    <location>
        <position position="30"/>
    </location>
    <ligand>
        <name>Zn(2+)</name>
        <dbReference type="ChEBI" id="CHEBI:29105"/>
    </ligand>
</feature>
<feature type="binding site" evidence="1">
    <location>
        <position position="212"/>
    </location>
    <ligand>
        <name>Zn(2+)</name>
        <dbReference type="ChEBI" id="CHEBI:29105"/>
    </ligand>
</feature>
<feature type="binding site" evidence="1">
    <location>
        <position position="237"/>
    </location>
    <ligand>
        <name>Zn(2+)</name>
        <dbReference type="ChEBI" id="CHEBI:29105"/>
    </ligand>
</feature>
<feature type="binding site" evidence="1">
    <location>
        <position position="241"/>
    </location>
    <ligand>
        <name>Zn(2+)</name>
        <dbReference type="ChEBI" id="CHEBI:29105"/>
    </ligand>
</feature>
<feature type="binding site" evidence="1">
    <location>
        <position position="271"/>
    </location>
    <ligand>
        <name>ATP</name>
        <dbReference type="ChEBI" id="CHEBI:30616"/>
    </ligand>
</feature>